<gene>
    <name evidence="1" type="primary">tpx</name>
    <name type="ordered locus">BH3194</name>
</gene>
<proteinExistence type="inferred from homology"/>
<organism>
    <name type="scientific">Halalkalibacterium halodurans (strain ATCC BAA-125 / DSM 18197 / FERM 7344 / JCM 9153 / C-125)</name>
    <name type="common">Bacillus halodurans</name>
    <dbReference type="NCBI Taxonomy" id="272558"/>
    <lineage>
        <taxon>Bacteria</taxon>
        <taxon>Bacillati</taxon>
        <taxon>Bacillota</taxon>
        <taxon>Bacilli</taxon>
        <taxon>Bacillales</taxon>
        <taxon>Bacillaceae</taxon>
        <taxon>Halalkalibacterium (ex Joshi et al. 2022)</taxon>
    </lineage>
</organism>
<feature type="chain" id="PRO_0000187869" description="Thiol peroxidase">
    <location>
        <begin position="1"/>
        <end position="166"/>
    </location>
</feature>
<feature type="domain" description="Thioredoxin" evidence="1">
    <location>
        <begin position="18"/>
        <end position="164"/>
    </location>
</feature>
<feature type="active site" description="Cysteine sulfenic acid (-SOH) intermediate" evidence="1">
    <location>
        <position position="60"/>
    </location>
</feature>
<feature type="disulfide bond" description="Redox-active" evidence="1">
    <location>
        <begin position="60"/>
        <end position="94"/>
    </location>
</feature>
<evidence type="ECO:0000255" key="1">
    <source>
        <dbReference type="HAMAP-Rule" id="MF_00269"/>
    </source>
</evidence>
<dbReference type="EC" id="1.11.1.24" evidence="1"/>
<dbReference type="EMBL" id="BA000004">
    <property type="protein sequence ID" value="BAB06913.1"/>
    <property type="molecule type" value="Genomic_DNA"/>
</dbReference>
<dbReference type="PIR" id="B84049">
    <property type="entry name" value="B84049"/>
</dbReference>
<dbReference type="RefSeq" id="WP_010899337.1">
    <property type="nucleotide sequence ID" value="NC_002570.2"/>
</dbReference>
<dbReference type="SMR" id="Q9K813"/>
<dbReference type="STRING" id="272558.gene:10729106"/>
<dbReference type="PeroxiBase" id="6009">
    <property type="entry name" value="BhaTPx"/>
</dbReference>
<dbReference type="GeneID" id="87598713"/>
<dbReference type="KEGG" id="bha:BH3194"/>
<dbReference type="eggNOG" id="COG2077">
    <property type="taxonomic scope" value="Bacteria"/>
</dbReference>
<dbReference type="HOGENOM" id="CLU_042529_12_0_9"/>
<dbReference type="OrthoDB" id="9781543at2"/>
<dbReference type="Proteomes" id="UP000001258">
    <property type="component" value="Chromosome"/>
</dbReference>
<dbReference type="GO" id="GO:0008379">
    <property type="term" value="F:thioredoxin peroxidase activity"/>
    <property type="evidence" value="ECO:0007669"/>
    <property type="project" value="UniProtKB-UniRule"/>
</dbReference>
<dbReference type="CDD" id="cd03014">
    <property type="entry name" value="PRX_Atyp2cys"/>
    <property type="match status" value="1"/>
</dbReference>
<dbReference type="Gene3D" id="3.40.30.10">
    <property type="entry name" value="Glutaredoxin"/>
    <property type="match status" value="1"/>
</dbReference>
<dbReference type="HAMAP" id="MF_00269">
    <property type="entry name" value="Tpx"/>
    <property type="match status" value="1"/>
</dbReference>
<dbReference type="InterPro" id="IPR013740">
    <property type="entry name" value="Redoxin"/>
</dbReference>
<dbReference type="InterPro" id="IPR036249">
    <property type="entry name" value="Thioredoxin-like_sf"/>
</dbReference>
<dbReference type="InterPro" id="IPR013766">
    <property type="entry name" value="Thioredoxin_domain"/>
</dbReference>
<dbReference type="InterPro" id="IPR002065">
    <property type="entry name" value="TPX"/>
</dbReference>
<dbReference type="InterPro" id="IPR018219">
    <property type="entry name" value="Tpx_CS"/>
</dbReference>
<dbReference type="InterPro" id="IPR050455">
    <property type="entry name" value="Tpx_Peroxidase_subfamily"/>
</dbReference>
<dbReference type="NCBIfam" id="NF001808">
    <property type="entry name" value="PRK00522.1"/>
    <property type="match status" value="1"/>
</dbReference>
<dbReference type="PANTHER" id="PTHR43110">
    <property type="entry name" value="THIOL PEROXIDASE"/>
    <property type="match status" value="1"/>
</dbReference>
<dbReference type="PANTHER" id="PTHR43110:SF1">
    <property type="entry name" value="THIOL PEROXIDASE"/>
    <property type="match status" value="1"/>
</dbReference>
<dbReference type="Pfam" id="PF08534">
    <property type="entry name" value="Redoxin"/>
    <property type="match status" value="1"/>
</dbReference>
<dbReference type="SUPFAM" id="SSF52833">
    <property type="entry name" value="Thioredoxin-like"/>
    <property type="match status" value="1"/>
</dbReference>
<dbReference type="PROSITE" id="PS51352">
    <property type="entry name" value="THIOREDOXIN_2"/>
    <property type="match status" value="1"/>
</dbReference>
<dbReference type="PROSITE" id="PS01265">
    <property type="entry name" value="TPX"/>
    <property type="match status" value="1"/>
</dbReference>
<accession>Q9K813</accession>
<keyword id="KW-0049">Antioxidant</keyword>
<keyword id="KW-1015">Disulfide bond</keyword>
<keyword id="KW-0560">Oxidoreductase</keyword>
<keyword id="KW-0575">Peroxidase</keyword>
<keyword id="KW-0676">Redox-active center</keyword>
<keyword id="KW-1185">Reference proteome</keyword>
<reference key="1">
    <citation type="journal article" date="2000" name="Nucleic Acids Res.">
        <title>Complete genome sequence of the alkaliphilic bacterium Bacillus halodurans and genomic sequence comparison with Bacillus subtilis.</title>
        <authorList>
            <person name="Takami H."/>
            <person name="Nakasone K."/>
            <person name="Takaki Y."/>
            <person name="Maeno G."/>
            <person name="Sasaki R."/>
            <person name="Masui N."/>
            <person name="Fuji F."/>
            <person name="Hirama C."/>
            <person name="Nakamura Y."/>
            <person name="Ogasawara N."/>
            <person name="Kuhara S."/>
            <person name="Horikoshi K."/>
        </authorList>
    </citation>
    <scope>NUCLEOTIDE SEQUENCE [LARGE SCALE GENOMIC DNA]</scope>
    <source>
        <strain>ATCC BAA-125 / DSM 18197 / FERM 7344 / JCM 9153 / C-125</strain>
    </source>
</reference>
<name>TPX_HALH5</name>
<comment type="function">
    <text evidence="1">Thiol-specific peroxidase that catalyzes the reduction of hydrogen peroxide and organic hydroperoxides to water and alcohols, respectively. Plays a role in cell protection against oxidative stress by detoxifying peroxides.</text>
</comment>
<comment type="catalytic activity">
    <reaction evidence="1">
        <text>a hydroperoxide + [thioredoxin]-dithiol = an alcohol + [thioredoxin]-disulfide + H2O</text>
        <dbReference type="Rhea" id="RHEA:62620"/>
        <dbReference type="Rhea" id="RHEA-COMP:10698"/>
        <dbReference type="Rhea" id="RHEA-COMP:10700"/>
        <dbReference type="ChEBI" id="CHEBI:15377"/>
        <dbReference type="ChEBI" id="CHEBI:29950"/>
        <dbReference type="ChEBI" id="CHEBI:30879"/>
        <dbReference type="ChEBI" id="CHEBI:35924"/>
        <dbReference type="ChEBI" id="CHEBI:50058"/>
        <dbReference type="EC" id="1.11.1.24"/>
    </reaction>
</comment>
<comment type="subunit">
    <text evidence="1">Homodimer.</text>
</comment>
<comment type="miscellaneous">
    <text evidence="1">The active site is a conserved redox-active cysteine residue, the peroxidatic cysteine (C(P)), which makes the nucleophilic attack on the peroxide substrate. The peroxide oxidizes the C(P)-SH to cysteine sulfenic acid (C(P)-SOH), which then reacts with another cysteine residue, the resolving cysteine (C(R)), to form a disulfide bridge. The disulfide is subsequently reduced by an appropriate electron donor to complete the catalytic cycle. In this atypical 2-Cys peroxiredoxin, C(R) is present in the same subunit to form an intramolecular disulfide. The disulfide is subsequently reduced by thioredoxin.</text>
</comment>
<comment type="similarity">
    <text evidence="1">Belongs to the peroxiredoxin family. Tpx subfamily.</text>
</comment>
<sequence>MASITFKGNPMTLLGNEVKVGDKAPNFTVLANDLSPVTLDDSKGKVRLISVVPSIDTGVCDAQTRKFNEEAANLDGVEVLTVSVDLPFAQKRWCATAGLEQAKTLSDHRDLSFGKAYGVAIEELRLLARAVFVINANDEVTYVEYVSEATNHPDYEKAIEAAKAAL</sequence>
<protein>
    <recommendedName>
        <fullName evidence="1">Thiol peroxidase</fullName>
        <shortName evidence="1">Tpx</shortName>
        <ecNumber evidence="1">1.11.1.24</ecNumber>
    </recommendedName>
    <alternativeName>
        <fullName evidence="1">Peroxiredoxin tpx</fullName>
        <shortName evidence="1">Prx</shortName>
    </alternativeName>
    <alternativeName>
        <fullName evidence="1">Thioredoxin peroxidase</fullName>
    </alternativeName>
    <alternativeName>
        <fullName evidence="1">Thioredoxin-dependent peroxiredoxin</fullName>
    </alternativeName>
</protein>